<dbReference type="EMBL" id="AE017143">
    <property type="protein sequence ID" value="AAP95031.1"/>
    <property type="molecule type" value="Genomic_DNA"/>
</dbReference>
<dbReference type="RefSeq" id="WP_010944085.1">
    <property type="nucleotide sequence ID" value="NC_002940.2"/>
</dbReference>
<dbReference type="SMR" id="Q7VPP3"/>
<dbReference type="STRING" id="233412.HD_0007"/>
<dbReference type="KEGG" id="hdu:HD_0007"/>
<dbReference type="eggNOG" id="COG0712">
    <property type="taxonomic scope" value="Bacteria"/>
</dbReference>
<dbReference type="HOGENOM" id="CLU_085114_3_0_6"/>
<dbReference type="OrthoDB" id="9816221at2"/>
<dbReference type="Proteomes" id="UP000001022">
    <property type="component" value="Chromosome"/>
</dbReference>
<dbReference type="GO" id="GO:0005886">
    <property type="term" value="C:plasma membrane"/>
    <property type="evidence" value="ECO:0007669"/>
    <property type="project" value="UniProtKB-SubCell"/>
</dbReference>
<dbReference type="GO" id="GO:0045259">
    <property type="term" value="C:proton-transporting ATP synthase complex"/>
    <property type="evidence" value="ECO:0007669"/>
    <property type="project" value="UniProtKB-KW"/>
</dbReference>
<dbReference type="GO" id="GO:0046933">
    <property type="term" value="F:proton-transporting ATP synthase activity, rotational mechanism"/>
    <property type="evidence" value="ECO:0007669"/>
    <property type="project" value="UniProtKB-UniRule"/>
</dbReference>
<dbReference type="Gene3D" id="1.10.520.20">
    <property type="entry name" value="N-terminal domain of the delta subunit of the F1F0-ATP synthase"/>
    <property type="match status" value="1"/>
</dbReference>
<dbReference type="HAMAP" id="MF_01416">
    <property type="entry name" value="ATP_synth_delta_bact"/>
    <property type="match status" value="1"/>
</dbReference>
<dbReference type="InterPro" id="IPR026015">
    <property type="entry name" value="ATP_synth_OSCP/delta_N_sf"/>
</dbReference>
<dbReference type="InterPro" id="IPR000711">
    <property type="entry name" value="ATPase_OSCP/dsu"/>
</dbReference>
<dbReference type="NCBIfam" id="TIGR01145">
    <property type="entry name" value="ATP_synt_delta"/>
    <property type="match status" value="1"/>
</dbReference>
<dbReference type="NCBIfam" id="NF004402">
    <property type="entry name" value="PRK05758.2-2"/>
    <property type="match status" value="1"/>
</dbReference>
<dbReference type="NCBIfam" id="NF004404">
    <property type="entry name" value="PRK05758.2-5"/>
    <property type="match status" value="1"/>
</dbReference>
<dbReference type="PANTHER" id="PTHR11910">
    <property type="entry name" value="ATP SYNTHASE DELTA CHAIN"/>
    <property type="match status" value="1"/>
</dbReference>
<dbReference type="Pfam" id="PF00213">
    <property type="entry name" value="OSCP"/>
    <property type="match status" value="1"/>
</dbReference>
<dbReference type="PRINTS" id="PR00125">
    <property type="entry name" value="ATPASEDELTA"/>
</dbReference>
<dbReference type="SUPFAM" id="SSF47928">
    <property type="entry name" value="N-terminal domain of the delta subunit of the F1F0-ATP synthase"/>
    <property type="match status" value="1"/>
</dbReference>
<accession>Q7VPP3</accession>
<reference key="1">
    <citation type="submission" date="2003-06" db="EMBL/GenBank/DDBJ databases">
        <title>The complete genome sequence of Haemophilus ducreyi.</title>
        <authorList>
            <person name="Munson R.S. Jr."/>
            <person name="Ray W.C."/>
            <person name="Mahairas G."/>
            <person name="Sabo P."/>
            <person name="Mungur R."/>
            <person name="Johnson L."/>
            <person name="Nguyen D."/>
            <person name="Wang J."/>
            <person name="Forst C."/>
            <person name="Hood L."/>
        </authorList>
    </citation>
    <scope>NUCLEOTIDE SEQUENCE [LARGE SCALE GENOMIC DNA]</scope>
    <source>
        <strain>35000HP / ATCC 700724</strain>
    </source>
</reference>
<name>ATPD_HAEDU</name>
<evidence type="ECO:0000255" key="1">
    <source>
        <dbReference type="HAMAP-Rule" id="MF_01416"/>
    </source>
</evidence>
<organism>
    <name type="scientific">Haemophilus ducreyi (strain 35000HP / ATCC 700724)</name>
    <dbReference type="NCBI Taxonomy" id="233412"/>
    <lineage>
        <taxon>Bacteria</taxon>
        <taxon>Pseudomonadati</taxon>
        <taxon>Pseudomonadota</taxon>
        <taxon>Gammaproteobacteria</taxon>
        <taxon>Pasteurellales</taxon>
        <taxon>Pasteurellaceae</taxon>
        <taxon>Haemophilus</taxon>
    </lineage>
</organism>
<comment type="function">
    <text evidence="1">F(1)F(0) ATP synthase produces ATP from ADP in the presence of a proton or sodium gradient. F-type ATPases consist of two structural domains, F(1) containing the extramembraneous catalytic core and F(0) containing the membrane proton channel, linked together by a central stalk and a peripheral stalk. During catalysis, ATP synthesis in the catalytic domain of F(1) is coupled via a rotary mechanism of the central stalk subunits to proton translocation.</text>
</comment>
<comment type="function">
    <text evidence="1">This protein is part of the stalk that links CF(0) to CF(1). It either transmits conformational changes from CF(0) to CF(1) or is implicated in proton conduction.</text>
</comment>
<comment type="subunit">
    <text evidence="1">F-type ATPases have 2 components, F(1) - the catalytic core - and F(0) - the membrane proton channel. F(1) has five subunits: alpha(3), beta(3), gamma(1), delta(1), epsilon(1). F(0) has three main subunits: a(1), b(2) and c(10-14). The alpha and beta chains form an alternating ring which encloses part of the gamma chain. F(1) is attached to F(0) by a central stalk formed by the gamma and epsilon chains, while a peripheral stalk is formed by the delta and b chains.</text>
</comment>
<comment type="subcellular location">
    <subcellularLocation>
        <location evidence="1">Cell inner membrane</location>
        <topology evidence="1">Peripheral membrane protein</topology>
    </subcellularLocation>
</comment>
<comment type="similarity">
    <text evidence="1">Belongs to the ATPase delta chain family.</text>
</comment>
<sequence length="177" mass="19939">MSELSTVARPYAKAAFDFALEQGQLDKWQEMLQFSALVAENEQVVEYITSSLASGQISEIFLQICDDQLDQYGQNFIRVMAENKRLAILPEVFNRFNALRAEYEAIKKVIVVSATELSQAQEEKIAKAMEKRLGQKVRLTTEIDSTLLTGIIIKYDDIVIDGSSRGQLNRLTQALSL</sequence>
<protein>
    <recommendedName>
        <fullName evidence="1">ATP synthase subunit delta</fullName>
    </recommendedName>
    <alternativeName>
        <fullName evidence="1">ATP synthase F(1) sector subunit delta</fullName>
    </alternativeName>
    <alternativeName>
        <fullName evidence="1">F-type ATPase subunit delta</fullName>
        <shortName evidence="1">F-ATPase subunit delta</shortName>
    </alternativeName>
</protein>
<feature type="chain" id="PRO_1000184727" description="ATP synthase subunit delta">
    <location>
        <begin position="1"/>
        <end position="177"/>
    </location>
</feature>
<keyword id="KW-0066">ATP synthesis</keyword>
<keyword id="KW-0997">Cell inner membrane</keyword>
<keyword id="KW-1003">Cell membrane</keyword>
<keyword id="KW-0139">CF(1)</keyword>
<keyword id="KW-0375">Hydrogen ion transport</keyword>
<keyword id="KW-0406">Ion transport</keyword>
<keyword id="KW-0472">Membrane</keyword>
<keyword id="KW-1185">Reference proteome</keyword>
<keyword id="KW-0813">Transport</keyword>
<gene>
    <name evidence="1" type="primary">atpH</name>
    <name type="ordered locus">HD_0007</name>
</gene>
<proteinExistence type="inferred from homology"/>